<reference key="1">
    <citation type="journal article" date="2005" name="Nucleic Acids Res.">
        <title>Genome dynamics and diversity of Shigella species, the etiologic agents of bacillary dysentery.</title>
        <authorList>
            <person name="Yang F."/>
            <person name="Yang J."/>
            <person name="Zhang X."/>
            <person name="Chen L."/>
            <person name="Jiang Y."/>
            <person name="Yan Y."/>
            <person name="Tang X."/>
            <person name="Wang J."/>
            <person name="Xiong Z."/>
            <person name="Dong J."/>
            <person name="Xue Y."/>
            <person name="Zhu Y."/>
            <person name="Xu X."/>
            <person name="Sun L."/>
            <person name="Chen S."/>
            <person name="Nie H."/>
            <person name="Peng J."/>
            <person name="Xu J."/>
            <person name="Wang Y."/>
            <person name="Yuan Z."/>
            <person name="Wen Y."/>
            <person name="Yao Z."/>
            <person name="Shen Y."/>
            <person name="Qiang B."/>
            <person name="Hou Y."/>
            <person name="Yu J."/>
            <person name="Jin Q."/>
        </authorList>
    </citation>
    <scope>NUCLEOTIDE SEQUENCE [LARGE SCALE GENOMIC DNA]</scope>
    <source>
        <strain>Sd197</strain>
    </source>
</reference>
<organism>
    <name type="scientific">Shigella dysenteriae serotype 1 (strain Sd197)</name>
    <dbReference type="NCBI Taxonomy" id="300267"/>
    <lineage>
        <taxon>Bacteria</taxon>
        <taxon>Pseudomonadati</taxon>
        <taxon>Pseudomonadota</taxon>
        <taxon>Gammaproteobacteria</taxon>
        <taxon>Enterobacterales</taxon>
        <taxon>Enterobacteriaceae</taxon>
        <taxon>Shigella</taxon>
    </lineage>
</organism>
<name>ISPH_SHIDS</name>
<keyword id="KW-0004">4Fe-4S</keyword>
<keyword id="KW-0408">Iron</keyword>
<keyword id="KW-0411">Iron-sulfur</keyword>
<keyword id="KW-0414">Isoprene biosynthesis</keyword>
<keyword id="KW-0479">Metal-binding</keyword>
<keyword id="KW-0560">Oxidoreductase</keyword>
<keyword id="KW-1185">Reference proteome</keyword>
<comment type="function">
    <text evidence="1">Catalyzes the conversion of 1-hydroxy-2-methyl-2-(E)-butenyl 4-diphosphate (HMBPP) into a mixture of isopentenyl diphosphate (IPP) and dimethylallyl diphosphate (DMAPP). Acts in the terminal step of the DOXP/MEP pathway for isoprenoid precursor biosynthesis.</text>
</comment>
<comment type="catalytic activity">
    <reaction evidence="1">
        <text>isopentenyl diphosphate + 2 oxidized [2Fe-2S]-[ferredoxin] + H2O = (2E)-4-hydroxy-3-methylbut-2-enyl diphosphate + 2 reduced [2Fe-2S]-[ferredoxin] + 2 H(+)</text>
        <dbReference type="Rhea" id="RHEA:24488"/>
        <dbReference type="Rhea" id="RHEA-COMP:10000"/>
        <dbReference type="Rhea" id="RHEA-COMP:10001"/>
        <dbReference type="ChEBI" id="CHEBI:15377"/>
        <dbReference type="ChEBI" id="CHEBI:15378"/>
        <dbReference type="ChEBI" id="CHEBI:33737"/>
        <dbReference type="ChEBI" id="CHEBI:33738"/>
        <dbReference type="ChEBI" id="CHEBI:128753"/>
        <dbReference type="ChEBI" id="CHEBI:128769"/>
        <dbReference type="EC" id="1.17.7.4"/>
    </reaction>
</comment>
<comment type="catalytic activity">
    <reaction evidence="1">
        <text>dimethylallyl diphosphate + 2 oxidized [2Fe-2S]-[ferredoxin] + H2O = (2E)-4-hydroxy-3-methylbut-2-enyl diphosphate + 2 reduced [2Fe-2S]-[ferredoxin] + 2 H(+)</text>
        <dbReference type="Rhea" id="RHEA:24825"/>
        <dbReference type="Rhea" id="RHEA-COMP:10000"/>
        <dbReference type="Rhea" id="RHEA-COMP:10001"/>
        <dbReference type="ChEBI" id="CHEBI:15377"/>
        <dbReference type="ChEBI" id="CHEBI:15378"/>
        <dbReference type="ChEBI" id="CHEBI:33737"/>
        <dbReference type="ChEBI" id="CHEBI:33738"/>
        <dbReference type="ChEBI" id="CHEBI:57623"/>
        <dbReference type="ChEBI" id="CHEBI:128753"/>
        <dbReference type="EC" id="1.17.7.4"/>
    </reaction>
</comment>
<comment type="cofactor">
    <cofactor evidence="1">
        <name>[4Fe-4S] cluster</name>
        <dbReference type="ChEBI" id="CHEBI:49883"/>
    </cofactor>
    <text evidence="1">Binds 1 [4Fe-4S] cluster per subunit.</text>
</comment>
<comment type="pathway">
    <text evidence="1">Isoprenoid biosynthesis; dimethylallyl diphosphate biosynthesis; dimethylallyl diphosphate from (2E)-4-hydroxy-3-methylbutenyl diphosphate: step 1/1.</text>
</comment>
<comment type="pathway">
    <text evidence="1">Isoprenoid biosynthesis; isopentenyl diphosphate biosynthesis via DXP pathway; isopentenyl diphosphate from 1-deoxy-D-xylulose 5-phosphate: step 6/6.</text>
</comment>
<comment type="subunit">
    <text evidence="1">Homodimer.</text>
</comment>
<comment type="similarity">
    <text evidence="1">Belongs to the IspH family.</text>
</comment>
<protein>
    <recommendedName>
        <fullName evidence="1">4-hydroxy-3-methylbut-2-enyl diphosphate reductase</fullName>
        <shortName evidence="1">HMBPP reductase</shortName>
        <ecNumber evidence="1">1.17.7.4</ecNumber>
    </recommendedName>
</protein>
<evidence type="ECO:0000255" key="1">
    <source>
        <dbReference type="HAMAP-Rule" id="MF_00191"/>
    </source>
</evidence>
<dbReference type="EC" id="1.17.7.4" evidence="1"/>
<dbReference type="EMBL" id="CP000034">
    <property type="protein sequence ID" value="ABB60289.1"/>
    <property type="molecule type" value="Genomic_DNA"/>
</dbReference>
<dbReference type="RefSeq" id="WP_001166395.1">
    <property type="nucleotide sequence ID" value="NC_007606.1"/>
</dbReference>
<dbReference type="RefSeq" id="YP_401778.1">
    <property type="nucleotide sequence ID" value="NC_007606.1"/>
</dbReference>
<dbReference type="SMR" id="Q32K68"/>
<dbReference type="STRING" id="300267.SDY_0051"/>
<dbReference type="EnsemblBacteria" id="ABB60289">
    <property type="protein sequence ID" value="ABB60289"/>
    <property type="gene ID" value="SDY_0051"/>
</dbReference>
<dbReference type="GeneID" id="93777407"/>
<dbReference type="KEGG" id="sdy:SDY_0051"/>
<dbReference type="PATRIC" id="fig|300267.13.peg.55"/>
<dbReference type="HOGENOM" id="CLU_027486_1_0_6"/>
<dbReference type="UniPathway" id="UPA00056">
    <property type="reaction ID" value="UER00097"/>
</dbReference>
<dbReference type="UniPathway" id="UPA00059">
    <property type="reaction ID" value="UER00105"/>
</dbReference>
<dbReference type="Proteomes" id="UP000002716">
    <property type="component" value="Chromosome"/>
</dbReference>
<dbReference type="GO" id="GO:0051539">
    <property type="term" value="F:4 iron, 4 sulfur cluster binding"/>
    <property type="evidence" value="ECO:0007669"/>
    <property type="project" value="UniProtKB-UniRule"/>
</dbReference>
<dbReference type="GO" id="GO:0051745">
    <property type="term" value="F:4-hydroxy-3-methylbut-2-enyl diphosphate reductase activity"/>
    <property type="evidence" value="ECO:0007669"/>
    <property type="project" value="UniProtKB-UniRule"/>
</dbReference>
<dbReference type="GO" id="GO:0046872">
    <property type="term" value="F:metal ion binding"/>
    <property type="evidence" value="ECO:0007669"/>
    <property type="project" value="UniProtKB-KW"/>
</dbReference>
<dbReference type="GO" id="GO:0050992">
    <property type="term" value="P:dimethylallyl diphosphate biosynthetic process"/>
    <property type="evidence" value="ECO:0007669"/>
    <property type="project" value="UniProtKB-UniRule"/>
</dbReference>
<dbReference type="GO" id="GO:0019288">
    <property type="term" value="P:isopentenyl diphosphate biosynthetic process, methylerythritol 4-phosphate pathway"/>
    <property type="evidence" value="ECO:0007669"/>
    <property type="project" value="UniProtKB-UniRule"/>
</dbReference>
<dbReference type="GO" id="GO:0016114">
    <property type="term" value="P:terpenoid biosynthetic process"/>
    <property type="evidence" value="ECO:0007669"/>
    <property type="project" value="UniProtKB-UniRule"/>
</dbReference>
<dbReference type="CDD" id="cd13944">
    <property type="entry name" value="lytB_ispH"/>
    <property type="match status" value="1"/>
</dbReference>
<dbReference type="FunFam" id="3.40.1010.20:FF:000001">
    <property type="entry name" value="4-hydroxy-3-methylbut-2-enyl diphosphate reductase"/>
    <property type="match status" value="1"/>
</dbReference>
<dbReference type="FunFam" id="3.40.50.11270:FF:000001">
    <property type="entry name" value="4-hydroxy-3-methylbut-2-enyl diphosphate reductase"/>
    <property type="match status" value="1"/>
</dbReference>
<dbReference type="Gene3D" id="3.40.50.11270">
    <property type="match status" value="1"/>
</dbReference>
<dbReference type="Gene3D" id="3.40.1010.20">
    <property type="entry name" value="4-hydroxy-3-methylbut-2-enyl diphosphate reductase, catalytic domain"/>
    <property type="match status" value="2"/>
</dbReference>
<dbReference type="HAMAP" id="MF_00191">
    <property type="entry name" value="IspH"/>
    <property type="match status" value="1"/>
</dbReference>
<dbReference type="InterPro" id="IPR003451">
    <property type="entry name" value="LytB/IspH"/>
</dbReference>
<dbReference type="NCBIfam" id="TIGR00216">
    <property type="entry name" value="ispH_lytB"/>
    <property type="match status" value="1"/>
</dbReference>
<dbReference type="NCBIfam" id="NF002188">
    <property type="entry name" value="PRK01045.1-2"/>
    <property type="match status" value="1"/>
</dbReference>
<dbReference type="NCBIfam" id="NF002190">
    <property type="entry name" value="PRK01045.1-4"/>
    <property type="match status" value="1"/>
</dbReference>
<dbReference type="PANTHER" id="PTHR30426">
    <property type="entry name" value="4-HYDROXY-3-METHYLBUT-2-ENYL DIPHOSPHATE REDUCTASE"/>
    <property type="match status" value="1"/>
</dbReference>
<dbReference type="PANTHER" id="PTHR30426:SF0">
    <property type="entry name" value="4-HYDROXY-3-METHYLBUT-2-ENYL DIPHOSPHATE REDUCTASE"/>
    <property type="match status" value="1"/>
</dbReference>
<dbReference type="Pfam" id="PF02401">
    <property type="entry name" value="LYTB"/>
    <property type="match status" value="1"/>
</dbReference>
<feature type="chain" id="PRO_1000021178" description="4-hydroxy-3-methylbut-2-enyl diphosphate reductase">
    <location>
        <begin position="1"/>
        <end position="316"/>
    </location>
</feature>
<feature type="active site" description="Proton donor" evidence="1">
    <location>
        <position position="126"/>
    </location>
</feature>
<feature type="binding site" evidence="1">
    <location>
        <position position="12"/>
    </location>
    <ligand>
        <name>[4Fe-4S] cluster</name>
        <dbReference type="ChEBI" id="CHEBI:49883"/>
    </ligand>
</feature>
<feature type="binding site" evidence="1">
    <location>
        <position position="41"/>
    </location>
    <ligand>
        <name>(2E)-4-hydroxy-3-methylbut-2-enyl diphosphate</name>
        <dbReference type="ChEBI" id="CHEBI:128753"/>
    </ligand>
</feature>
<feature type="binding site" evidence="1">
    <location>
        <position position="41"/>
    </location>
    <ligand>
        <name>dimethylallyl diphosphate</name>
        <dbReference type="ChEBI" id="CHEBI:57623"/>
    </ligand>
</feature>
<feature type="binding site" evidence="1">
    <location>
        <position position="41"/>
    </location>
    <ligand>
        <name>isopentenyl diphosphate</name>
        <dbReference type="ChEBI" id="CHEBI:128769"/>
    </ligand>
</feature>
<feature type="binding site" evidence="1">
    <location>
        <position position="74"/>
    </location>
    <ligand>
        <name>(2E)-4-hydroxy-3-methylbut-2-enyl diphosphate</name>
        <dbReference type="ChEBI" id="CHEBI:128753"/>
    </ligand>
</feature>
<feature type="binding site" evidence="1">
    <location>
        <position position="74"/>
    </location>
    <ligand>
        <name>dimethylallyl diphosphate</name>
        <dbReference type="ChEBI" id="CHEBI:57623"/>
    </ligand>
</feature>
<feature type="binding site" evidence="1">
    <location>
        <position position="74"/>
    </location>
    <ligand>
        <name>isopentenyl diphosphate</name>
        <dbReference type="ChEBI" id="CHEBI:128769"/>
    </ligand>
</feature>
<feature type="binding site" evidence="1">
    <location>
        <position position="96"/>
    </location>
    <ligand>
        <name>[4Fe-4S] cluster</name>
        <dbReference type="ChEBI" id="CHEBI:49883"/>
    </ligand>
</feature>
<feature type="binding site" evidence="1">
    <location>
        <position position="124"/>
    </location>
    <ligand>
        <name>(2E)-4-hydroxy-3-methylbut-2-enyl diphosphate</name>
        <dbReference type="ChEBI" id="CHEBI:128753"/>
    </ligand>
</feature>
<feature type="binding site" evidence="1">
    <location>
        <position position="124"/>
    </location>
    <ligand>
        <name>dimethylallyl diphosphate</name>
        <dbReference type="ChEBI" id="CHEBI:57623"/>
    </ligand>
</feature>
<feature type="binding site" evidence="1">
    <location>
        <position position="124"/>
    </location>
    <ligand>
        <name>isopentenyl diphosphate</name>
        <dbReference type="ChEBI" id="CHEBI:128769"/>
    </ligand>
</feature>
<feature type="binding site" evidence="1">
    <location>
        <position position="167"/>
    </location>
    <ligand>
        <name>(2E)-4-hydroxy-3-methylbut-2-enyl diphosphate</name>
        <dbReference type="ChEBI" id="CHEBI:128753"/>
    </ligand>
</feature>
<feature type="binding site" evidence="1">
    <location>
        <position position="197"/>
    </location>
    <ligand>
        <name>[4Fe-4S] cluster</name>
        <dbReference type="ChEBI" id="CHEBI:49883"/>
    </ligand>
</feature>
<feature type="binding site" evidence="1">
    <location>
        <position position="225"/>
    </location>
    <ligand>
        <name>(2E)-4-hydroxy-3-methylbut-2-enyl diphosphate</name>
        <dbReference type="ChEBI" id="CHEBI:128753"/>
    </ligand>
</feature>
<feature type="binding site" evidence="1">
    <location>
        <position position="225"/>
    </location>
    <ligand>
        <name>dimethylallyl diphosphate</name>
        <dbReference type="ChEBI" id="CHEBI:57623"/>
    </ligand>
</feature>
<feature type="binding site" evidence="1">
    <location>
        <position position="225"/>
    </location>
    <ligand>
        <name>isopentenyl diphosphate</name>
        <dbReference type="ChEBI" id="CHEBI:128769"/>
    </ligand>
</feature>
<feature type="binding site" evidence="1">
    <location>
        <position position="226"/>
    </location>
    <ligand>
        <name>(2E)-4-hydroxy-3-methylbut-2-enyl diphosphate</name>
        <dbReference type="ChEBI" id="CHEBI:128753"/>
    </ligand>
</feature>
<feature type="binding site" evidence="1">
    <location>
        <position position="226"/>
    </location>
    <ligand>
        <name>dimethylallyl diphosphate</name>
        <dbReference type="ChEBI" id="CHEBI:57623"/>
    </ligand>
</feature>
<feature type="binding site" evidence="1">
    <location>
        <position position="226"/>
    </location>
    <ligand>
        <name>isopentenyl diphosphate</name>
        <dbReference type="ChEBI" id="CHEBI:128769"/>
    </ligand>
</feature>
<feature type="binding site" evidence="1">
    <location>
        <position position="227"/>
    </location>
    <ligand>
        <name>(2E)-4-hydroxy-3-methylbut-2-enyl diphosphate</name>
        <dbReference type="ChEBI" id="CHEBI:128753"/>
    </ligand>
</feature>
<feature type="binding site" evidence="1">
    <location>
        <position position="227"/>
    </location>
    <ligand>
        <name>dimethylallyl diphosphate</name>
        <dbReference type="ChEBI" id="CHEBI:57623"/>
    </ligand>
</feature>
<feature type="binding site" evidence="1">
    <location>
        <position position="227"/>
    </location>
    <ligand>
        <name>isopentenyl diphosphate</name>
        <dbReference type="ChEBI" id="CHEBI:128769"/>
    </ligand>
</feature>
<feature type="binding site" evidence="1">
    <location>
        <position position="269"/>
    </location>
    <ligand>
        <name>(2E)-4-hydroxy-3-methylbut-2-enyl diphosphate</name>
        <dbReference type="ChEBI" id="CHEBI:128753"/>
    </ligand>
</feature>
<feature type="binding site" evidence="1">
    <location>
        <position position="269"/>
    </location>
    <ligand>
        <name>dimethylallyl diphosphate</name>
        <dbReference type="ChEBI" id="CHEBI:57623"/>
    </ligand>
</feature>
<feature type="binding site" evidence="1">
    <location>
        <position position="269"/>
    </location>
    <ligand>
        <name>isopentenyl diphosphate</name>
        <dbReference type="ChEBI" id="CHEBI:128769"/>
    </ligand>
</feature>
<accession>Q32K68</accession>
<gene>
    <name evidence="1" type="primary">ispH</name>
    <name type="ordered locus">SDY_0051</name>
</gene>
<proteinExistence type="inferred from homology"/>
<sequence>MQILLANPRGFCAGVDRAISIVENALAIYGAPIYVRHEVVHNRYVVDSLRERGAIFIEQISEVPDGAILIFSAHGVSQAVRNEAKSRDLTVFDATCPLVTKVHMEVARASRRGEESILIGHAGHPEVEGTMGQYSNPEGGMYLVESPDDVWKLTVKNEEKLSFMTQTTLSVDDTSDVIDALRKRFPKIVGPRKDDICYATTNRQEAVRALAEQAEVVLVVGSKNSSNSNRLAELAQRMGKRAFLIDDAKDIQEEWVKEVKCVGVTAGASAPDILVQNVVARLQQLGGGEAIPLEGREENIVFEVPKELRVDIREVD</sequence>